<keyword id="KW-0002">3D-structure</keyword>
<keyword id="KW-0130">Cell adhesion</keyword>
<keyword id="KW-0965">Cell junction</keyword>
<keyword id="KW-0175">Coiled coil</keyword>
<keyword id="KW-0963">Cytoplasm</keyword>
<keyword id="KW-0217">Developmental protein</keyword>
<keyword id="KW-1185">Reference proteome</keyword>
<proteinExistence type="evidence at protein level"/>
<evidence type="ECO:0000255" key="1"/>
<evidence type="ECO:0000256" key="2">
    <source>
        <dbReference type="SAM" id="MobiDB-lite"/>
    </source>
</evidence>
<evidence type="ECO:0000269" key="3">
    <source>
    </source>
</evidence>
<evidence type="ECO:0000269" key="4">
    <source>
    </source>
</evidence>
<evidence type="ECO:0000269" key="5">
    <source>
    </source>
</evidence>
<evidence type="ECO:0000305" key="6"/>
<evidence type="ECO:0000312" key="7">
    <source>
        <dbReference type="WormBase" id="R13H4.4a"/>
    </source>
</evidence>
<evidence type="ECO:0007829" key="8">
    <source>
        <dbReference type="PDB" id="5H5M"/>
    </source>
</evidence>
<evidence type="ECO:0007829" key="9">
    <source>
        <dbReference type="PDB" id="5XA5"/>
    </source>
</evidence>
<evidence type="ECO:0007829" key="10">
    <source>
        <dbReference type="PDB" id="7UUW"/>
    </source>
</evidence>
<name>HMP1_CAEEL</name>
<protein>
    <recommendedName>
        <fullName evidence="6">Alpha-catenin-like protein hmp-1</fullName>
    </recommendedName>
    <alternativeName>
        <fullName evidence="7">Protein humpback-1</fullName>
    </alternativeName>
</protein>
<organism>
    <name type="scientific">Caenorhabditis elegans</name>
    <dbReference type="NCBI Taxonomy" id="6239"/>
    <lineage>
        <taxon>Eukaryota</taxon>
        <taxon>Metazoa</taxon>
        <taxon>Ecdysozoa</taxon>
        <taxon>Nematoda</taxon>
        <taxon>Chromadorea</taxon>
        <taxon>Rhabditida</taxon>
        <taxon>Rhabditina</taxon>
        <taxon>Rhabditomorpha</taxon>
        <taxon>Rhabditoidea</taxon>
        <taxon>Rhabditidae</taxon>
        <taxon>Peloderinae</taxon>
        <taxon>Caenorhabditis</taxon>
    </lineage>
</organism>
<feature type="chain" id="PRO_0000268648" description="Alpha-catenin-like protein hmp-1" evidence="6">
    <location>
        <begin position="1"/>
        <end position="927"/>
    </location>
</feature>
<feature type="region of interest" description="Disordered" evidence="2">
    <location>
        <begin position="901"/>
        <end position="927"/>
    </location>
</feature>
<feature type="coiled-coil region" evidence="1">
    <location>
        <begin position="319"/>
        <end position="354"/>
    </location>
</feature>
<feature type="coiled-coil region" evidence="1">
    <location>
        <begin position="672"/>
        <end position="696"/>
    </location>
</feature>
<feature type="helix" evidence="9">
    <location>
        <begin position="19"/>
        <end position="32"/>
    </location>
</feature>
<feature type="helix" evidence="9">
    <location>
        <begin position="47"/>
        <end position="70"/>
    </location>
</feature>
<feature type="turn" evidence="9">
    <location>
        <begin position="73"/>
        <end position="77"/>
    </location>
</feature>
<feature type="helix" evidence="9">
    <location>
        <begin position="79"/>
        <end position="108"/>
    </location>
</feature>
<feature type="turn" evidence="9">
    <location>
        <begin position="109"/>
        <end position="111"/>
    </location>
</feature>
<feature type="helix" evidence="9">
    <location>
        <begin position="113"/>
        <end position="161"/>
    </location>
</feature>
<feature type="helix" evidence="9">
    <location>
        <begin position="165"/>
        <end position="192"/>
    </location>
</feature>
<feature type="strand" evidence="9">
    <location>
        <begin position="193"/>
        <end position="195"/>
    </location>
</feature>
<feature type="helix" evidence="9">
    <location>
        <begin position="196"/>
        <end position="225"/>
    </location>
</feature>
<feature type="helix" evidence="9">
    <location>
        <begin position="230"/>
        <end position="254"/>
    </location>
</feature>
<feature type="helix" evidence="8">
    <location>
        <begin position="271"/>
        <end position="282"/>
    </location>
</feature>
<feature type="turn" evidence="8">
    <location>
        <begin position="287"/>
        <end position="289"/>
    </location>
</feature>
<feature type="helix" evidence="8">
    <location>
        <begin position="292"/>
        <end position="314"/>
    </location>
</feature>
<feature type="helix" evidence="8">
    <location>
        <begin position="321"/>
        <end position="345"/>
    </location>
</feature>
<feature type="helix" evidence="8">
    <location>
        <begin position="357"/>
        <end position="387"/>
    </location>
</feature>
<feature type="helix" evidence="8">
    <location>
        <begin position="393"/>
        <end position="402"/>
    </location>
</feature>
<feature type="turn" evidence="8">
    <location>
        <begin position="403"/>
        <end position="405"/>
    </location>
</feature>
<feature type="helix" evidence="8">
    <location>
        <begin position="407"/>
        <end position="431"/>
    </location>
</feature>
<feature type="helix" evidence="8">
    <location>
        <begin position="432"/>
        <end position="434"/>
    </location>
</feature>
<feature type="helix" evidence="8">
    <location>
        <begin position="438"/>
        <end position="467"/>
    </location>
</feature>
<feature type="helix" evidence="8">
    <location>
        <begin position="472"/>
        <end position="498"/>
    </location>
</feature>
<feature type="helix" evidence="8">
    <location>
        <begin position="502"/>
        <end position="525"/>
    </location>
</feature>
<feature type="helix" evidence="8">
    <location>
        <begin position="541"/>
        <end position="565"/>
    </location>
</feature>
<feature type="helix" evidence="8">
    <location>
        <begin position="570"/>
        <end position="584"/>
    </location>
</feature>
<feature type="helix" evidence="8">
    <location>
        <begin position="586"/>
        <end position="604"/>
    </location>
</feature>
<feature type="helix" evidence="8">
    <location>
        <begin position="605"/>
        <end position="607"/>
    </location>
</feature>
<feature type="helix" evidence="8">
    <location>
        <begin position="610"/>
        <end position="639"/>
    </location>
</feature>
<feature type="helix" evidence="10">
    <location>
        <begin position="691"/>
        <end position="695"/>
    </location>
</feature>
<feature type="turn" evidence="10">
    <location>
        <begin position="711"/>
        <end position="713"/>
    </location>
</feature>
<feature type="helix" evidence="10">
    <location>
        <begin position="715"/>
        <end position="737"/>
    </location>
</feature>
<feature type="helix" evidence="10">
    <location>
        <begin position="745"/>
        <end position="772"/>
    </location>
</feature>
<feature type="helix" evidence="10">
    <location>
        <begin position="777"/>
        <end position="809"/>
    </location>
</feature>
<feature type="helix" evidence="10">
    <location>
        <begin position="818"/>
        <end position="847"/>
    </location>
</feature>
<sequence length="927" mass="103994">MPANGNSHAYFNIDEVRSKNVLKQITQLINEVTNITETFPLKPGQTTEGLVATLDAAVANFLQTGSFAISKCPIANSDPRAIDLLHEALGAVQDTGQVMIQTGRDFVRDSTSTNKRAIATNSGRNLLTAVAKFLILADSIDVKVIVDKVDEVRETAHQMIEADTKIKVDDLYNLLISQIEELDITVRRRAIDLVKPNQRDDLLAARSALRQTAPLLYTSTRTFVRHPEHEEARRNRDYTADEMHSALNALESVLNGQQPKVTFSEYGRIGDLINEIDTFQNRIEIDPAHYRRGTDRPDLEGHCERIVSGSASIADAESTRENRKQKIVAECNNLRQALQELLTEYEKSTGRRDDNDDIPLGIAEVHKRTKDLRRHLRRAIVDHISDAFLDTRTPLILLIEAAKEGHEENTRYRSKMFQEHANEIVSVARLSCQLSSDVESVSVIQHTAAQLEKLAPQVAQAAILLCHQPTSKTAQENMETYKNAWFDKVRLLTTALDNITTLDDFLAVSEAHIVEDCERGIKGITANASTPDENAANCETVDCAAGSIRGRALRVCDVVDAEMDFLQNSEYTETVKQAVRILKTQRVDQFAERASALANRQEAHGLTWDPKTKEEEMNEFINACTLVHDAVKDIRHALLMNRSMNDVDSDVEYEADGVGAANADANRTISEQENQQNLMRRLPEEEKKKIQAQIDIFKVTQTRFEREVAKWDETGNDIISLANNMCKIMMSMTEFTRGCGPLKTTMDVIRAAQEISLNGSKLNALARQIGEESADSQTKKDLLAYLSQITLYCQQLNICSKVKADVTQVGNELVVSALDSAMSLIQTARNLLTAVVQTVKAAYIASTKFRRPNANSVRVEWRMAPPKKQPLIRPQKNNAIIRRASERRPLQPAKVLAEFTRNEIETGRDSDDEELDRRHQQRINGRL</sequence>
<accession>P90947</accession>
<dbReference type="EMBL" id="AF016852">
    <property type="protein sequence ID" value="AAB94551.1"/>
    <property type="molecule type" value="mRNA"/>
</dbReference>
<dbReference type="EMBL" id="Z81579">
    <property type="protein sequence ID" value="CAB61019.1"/>
    <property type="molecule type" value="Genomic_DNA"/>
</dbReference>
<dbReference type="RefSeq" id="NP_505985.1">
    <property type="nucleotide sequence ID" value="NM_073584.7"/>
</dbReference>
<dbReference type="PDB" id="5H5M">
    <property type="method" value="X-ray"/>
    <property type="resolution" value="2.40 A"/>
    <property type="chains" value="A/B=267-646"/>
</dbReference>
<dbReference type="PDB" id="5XA5">
    <property type="method" value="X-ray"/>
    <property type="resolution" value="1.60 A"/>
    <property type="chains" value="A=2-275"/>
</dbReference>
<dbReference type="PDB" id="7UUW">
    <property type="method" value="EM"/>
    <property type="resolution" value="3.36 A"/>
    <property type="chains" value="G/H/I/K/L/Z=677-927"/>
</dbReference>
<dbReference type="PDBsum" id="5H5M"/>
<dbReference type="PDBsum" id="5XA5"/>
<dbReference type="PDBsum" id="7UUW"/>
<dbReference type="EMDB" id="EMD-26748"/>
<dbReference type="EMDB" id="EMD-26805"/>
<dbReference type="SMR" id="P90947"/>
<dbReference type="BioGRID" id="44648">
    <property type="interactions" value="26"/>
</dbReference>
<dbReference type="ComplexPortal" id="CPX-499">
    <property type="entry name" value="Catenin-Cadherin complex"/>
</dbReference>
<dbReference type="DIP" id="DIP-61638N"/>
<dbReference type="FunCoup" id="P90947">
    <property type="interactions" value="1735"/>
</dbReference>
<dbReference type="IntAct" id="P90947">
    <property type="interactions" value="1"/>
</dbReference>
<dbReference type="STRING" id="6239.R13H4.4b.1"/>
<dbReference type="iPTMnet" id="P90947"/>
<dbReference type="PaxDb" id="6239-R13H4.4b"/>
<dbReference type="EnsemblMetazoa" id="R13H4.4a.1">
    <property type="protein sequence ID" value="R13H4.4a.1"/>
    <property type="gene ID" value="WBGene00001978"/>
</dbReference>
<dbReference type="GeneID" id="179624"/>
<dbReference type="KEGG" id="cel:CELE_R13H4.4"/>
<dbReference type="UCSC" id="R13H4.4a">
    <property type="organism name" value="c. elegans"/>
</dbReference>
<dbReference type="AGR" id="WB:WBGene00001978"/>
<dbReference type="CTD" id="179624"/>
<dbReference type="WormBase" id="R13H4.4a">
    <property type="protein sequence ID" value="CE25089"/>
    <property type="gene ID" value="WBGene00001978"/>
    <property type="gene designation" value="hmp-1"/>
</dbReference>
<dbReference type="eggNOG" id="KOG3681">
    <property type="taxonomic scope" value="Eukaryota"/>
</dbReference>
<dbReference type="GeneTree" id="ENSGT01030000234543"/>
<dbReference type="HOGENOM" id="CLU_015314_2_0_1"/>
<dbReference type="InParanoid" id="P90947"/>
<dbReference type="OrthoDB" id="6376697at2759"/>
<dbReference type="Reactome" id="R-CEL-5218920">
    <property type="pathway name" value="VEGFR2 mediated vascular permeability"/>
</dbReference>
<dbReference type="SignaLink" id="P90947"/>
<dbReference type="PRO" id="PR:P90947"/>
<dbReference type="Proteomes" id="UP000001940">
    <property type="component" value="Chromosome V"/>
</dbReference>
<dbReference type="Bgee" id="WBGene00001978">
    <property type="expression patterns" value="Expressed in pharyngeal muscle cell (C elegans) and 4 other cell types or tissues"/>
</dbReference>
<dbReference type="ExpressionAtlas" id="P90947">
    <property type="expression patterns" value="baseline and differential"/>
</dbReference>
<dbReference type="GO" id="GO:0005912">
    <property type="term" value="C:adherens junction"/>
    <property type="evidence" value="ECO:0000314"/>
    <property type="project" value="WormBase"/>
</dbReference>
<dbReference type="GO" id="GO:0043296">
    <property type="term" value="C:apical junction complex"/>
    <property type="evidence" value="ECO:0000314"/>
    <property type="project" value="WormBase"/>
</dbReference>
<dbReference type="GO" id="GO:0016342">
    <property type="term" value="C:catenin complex"/>
    <property type="evidence" value="ECO:0000314"/>
    <property type="project" value="WormBase"/>
</dbReference>
<dbReference type="GO" id="GO:0005737">
    <property type="term" value="C:cytoplasm"/>
    <property type="evidence" value="ECO:0007669"/>
    <property type="project" value="UniProtKB-SubCell"/>
</dbReference>
<dbReference type="GO" id="GO:0051015">
    <property type="term" value="F:actin filament binding"/>
    <property type="evidence" value="ECO:0000314"/>
    <property type="project" value="WormBase"/>
</dbReference>
<dbReference type="GO" id="GO:0008013">
    <property type="term" value="F:beta-catenin binding"/>
    <property type="evidence" value="ECO:0000353"/>
    <property type="project" value="WormBase"/>
</dbReference>
<dbReference type="GO" id="GO:0045296">
    <property type="term" value="F:cadherin binding"/>
    <property type="evidence" value="ECO:0007669"/>
    <property type="project" value="InterPro"/>
</dbReference>
<dbReference type="GO" id="GO:0016477">
    <property type="term" value="P:cell migration"/>
    <property type="evidence" value="ECO:0000315"/>
    <property type="project" value="WormBase"/>
</dbReference>
<dbReference type="GO" id="GO:0042074">
    <property type="term" value="P:cell migration involved in gastrulation"/>
    <property type="evidence" value="ECO:0000316"/>
    <property type="project" value="WormBase"/>
</dbReference>
<dbReference type="GO" id="GO:0098609">
    <property type="term" value="P:cell-cell adhesion"/>
    <property type="evidence" value="ECO:0000318"/>
    <property type="project" value="GO_Central"/>
</dbReference>
<dbReference type="GO" id="GO:0044331">
    <property type="term" value="P:cell-cell adhesion mediated by cadherin"/>
    <property type="evidence" value="ECO:0000269"/>
    <property type="project" value="ComplexPortal"/>
</dbReference>
<dbReference type="GO" id="GO:0030866">
    <property type="term" value="P:cortical actin cytoskeleton organization"/>
    <property type="evidence" value="ECO:0000315"/>
    <property type="project" value="WormBase"/>
</dbReference>
<dbReference type="GO" id="GO:0010172">
    <property type="term" value="P:embryonic body morphogenesis"/>
    <property type="evidence" value="ECO:0000315"/>
    <property type="project" value="WormBase"/>
</dbReference>
<dbReference type="GO" id="GO:0032956">
    <property type="term" value="P:regulation of actin cytoskeleton organization"/>
    <property type="evidence" value="ECO:0000315"/>
    <property type="project" value="WormBase"/>
</dbReference>
<dbReference type="GO" id="GO:0032880">
    <property type="term" value="P:regulation of protein localization"/>
    <property type="evidence" value="ECO:0000315"/>
    <property type="project" value="WormBase"/>
</dbReference>
<dbReference type="Gene3D" id="6.10.250.2510">
    <property type="match status" value="1"/>
</dbReference>
<dbReference type="Gene3D" id="1.20.120.230">
    <property type="entry name" value="Alpha-catenin/vinculin-like"/>
    <property type="match status" value="5"/>
</dbReference>
<dbReference type="InterPro" id="IPR036723">
    <property type="entry name" value="Alpha-catenin/vinculin-like_sf"/>
</dbReference>
<dbReference type="InterPro" id="IPR001033">
    <property type="entry name" value="Alpha_catenin"/>
</dbReference>
<dbReference type="InterPro" id="IPR006077">
    <property type="entry name" value="Vinculin/catenin"/>
</dbReference>
<dbReference type="PANTHER" id="PTHR18914">
    <property type="entry name" value="ALPHA CATENIN"/>
    <property type="match status" value="1"/>
</dbReference>
<dbReference type="PANTHER" id="PTHR18914:SF9">
    <property type="entry name" value="CATENIN ALPHA"/>
    <property type="match status" value="1"/>
</dbReference>
<dbReference type="Pfam" id="PF01044">
    <property type="entry name" value="Vinculin"/>
    <property type="match status" value="1"/>
</dbReference>
<dbReference type="PRINTS" id="PR00805">
    <property type="entry name" value="ALPHACATENIN"/>
</dbReference>
<dbReference type="SUPFAM" id="SSF47220">
    <property type="entry name" value="alpha-catenin/vinculin-like"/>
    <property type="match status" value="4"/>
</dbReference>
<reference key="1">
    <citation type="journal article" date="1998" name="J. Cell Biol.">
        <title>A putative catenin-cadherin system mediates morphogenesis of the Caenorhabditis elegans embryo.</title>
        <authorList>
            <person name="Costa M."/>
            <person name="Raich W."/>
            <person name="Agbunag C."/>
            <person name="Leung B."/>
            <person name="Hardin J."/>
            <person name="Priess J.R."/>
        </authorList>
    </citation>
    <scope>NUCLEOTIDE SEQUENCE [MRNA]</scope>
    <scope>FUNCTION</scope>
    <scope>DEVELOPMENTAL STAGE</scope>
    <scope>TISSUE SPECIFICITY</scope>
    <scope>SUBCELLULAR LOCATION</scope>
    <scope>DISRUPTION PHENOTYPE</scope>
    <source>
        <strain>Bristol N2</strain>
    </source>
</reference>
<reference key="2">
    <citation type="journal article" date="1998" name="Science">
        <title>Genome sequence of the nematode C. elegans: a platform for investigating biology.</title>
        <authorList>
            <consortium name="The C. elegans sequencing consortium"/>
        </authorList>
    </citation>
    <scope>NUCLEOTIDE SEQUENCE [LARGE SCALE GENOMIC DNA]</scope>
    <source>
        <strain>Bristol N2</strain>
    </source>
</reference>
<reference key="3">
    <citation type="journal article" date="2001" name="Genetics">
        <title>The divergent Caenorhabditis elegans beta-catenin proteins BAR-1, WRM-1 and HMP-2 make distinct protein interactions but retain functional redundancy in vivo.</title>
        <authorList>
            <person name="Natarajan L."/>
            <person name="Witwer N.E."/>
            <person name="Eisenmann D.M."/>
        </authorList>
    </citation>
    <scope>POSSIBLE INTERACTION WITH HMP-2</scope>
</reference>
<reference key="4">
    <citation type="journal article" date="2015" name="Nat. Cell Biol.">
        <title>An instructive role for C. elegans E-cadherin in translating cell contact cues into cortical polarity.</title>
        <authorList>
            <person name="Klompstra D."/>
            <person name="Anderson D.C."/>
            <person name="Yeh J.Y."/>
            <person name="Zilberman Y."/>
            <person name="Nance J."/>
        </authorList>
    </citation>
    <scope>FUNCTION</scope>
    <scope>IDENTIFICATION IN CATENIN-CADHERIN COMPLEX</scope>
    <scope>SUBCELLULAR LOCATION</scope>
    <scope>DEVELOPMENTAL STAGE</scope>
</reference>
<comment type="function">
    <text evidence="4 5">Required for cell migration during body enclosure and cell shape changes during body elongation (PubMed:9531567). Required for proper localization of other junctional components, such as pac-1 (PubMed:25938815).</text>
</comment>
<comment type="subunit">
    <text evidence="3 6">Component of a core catenin-cadherin complex consisting of hmr-1, hmp-1 and hmp-2; the complex localizes to adherens junctions (Probable). May interact with hmp-2 (PubMed:11560894).</text>
</comment>
<comment type="subcellular location">
    <subcellularLocation>
        <location evidence="4 5">Cell junction</location>
        <location evidence="4 5">Adherens junction</location>
    </subcellularLocation>
    <subcellularLocation>
        <location evidence="4">Cytoplasm</location>
    </subcellularLocation>
</comment>
<comment type="tissue specificity">
    <text evidence="5">Epidermal cells.</text>
</comment>
<comment type="developmental stage">
    <text evidence="4 5">Present in all embryonic blastomeres at early stages of development.</text>
</comment>
<comment type="disruption phenotype">
    <text evidence="5">Worms arrest their elongation at the 1.25X to 1.5X stage.</text>
</comment>
<comment type="similarity">
    <text evidence="6">Belongs to the vinculin/alpha-catenin family.</text>
</comment>
<gene>
    <name type="primary">hmp-1</name>
    <name type="ORF">R13H4.4</name>
</gene>